<name>RL29_YERPS</name>
<accession>Q664S9</accession>
<comment type="similarity">
    <text evidence="1">Belongs to the universal ribosomal protein uL29 family.</text>
</comment>
<sequence>MKAQELREKSVEELNTELLNLLREQFNLRMQAASGQLQQTHLLKQVRRNVARVKTLLTEKAGA</sequence>
<proteinExistence type="inferred from homology"/>
<dbReference type="EMBL" id="BX936398">
    <property type="protein sequence ID" value="CAH22928.1"/>
    <property type="molecule type" value="Genomic_DNA"/>
</dbReference>
<dbReference type="RefSeq" id="WP_002218942.1">
    <property type="nucleotide sequence ID" value="NZ_CP009712.1"/>
</dbReference>
<dbReference type="SMR" id="Q664S9"/>
<dbReference type="GeneID" id="96663188"/>
<dbReference type="KEGG" id="ypo:BZ17_2897"/>
<dbReference type="KEGG" id="yps:YPTB3690"/>
<dbReference type="PATRIC" id="fig|273123.14.peg.3038"/>
<dbReference type="Proteomes" id="UP000001011">
    <property type="component" value="Chromosome"/>
</dbReference>
<dbReference type="GO" id="GO:0022625">
    <property type="term" value="C:cytosolic large ribosomal subunit"/>
    <property type="evidence" value="ECO:0007669"/>
    <property type="project" value="TreeGrafter"/>
</dbReference>
<dbReference type="GO" id="GO:0003735">
    <property type="term" value="F:structural constituent of ribosome"/>
    <property type="evidence" value="ECO:0007669"/>
    <property type="project" value="InterPro"/>
</dbReference>
<dbReference type="GO" id="GO:0006412">
    <property type="term" value="P:translation"/>
    <property type="evidence" value="ECO:0007669"/>
    <property type="project" value="UniProtKB-UniRule"/>
</dbReference>
<dbReference type="CDD" id="cd00427">
    <property type="entry name" value="Ribosomal_L29_HIP"/>
    <property type="match status" value="1"/>
</dbReference>
<dbReference type="FunFam" id="1.10.287.310:FF:000001">
    <property type="entry name" value="50S ribosomal protein L29"/>
    <property type="match status" value="1"/>
</dbReference>
<dbReference type="Gene3D" id="6.10.140.1970">
    <property type="match status" value="1"/>
</dbReference>
<dbReference type="HAMAP" id="MF_00374">
    <property type="entry name" value="Ribosomal_uL29"/>
    <property type="match status" value="1"/>
</dbReference>
<dbReference type="InterPro" id="IPR050063">
    <property type="entry name" value="Ribosomal_protein_uL29"/>
</dbReference>
<dbReference type="InterPro" id="IPR001854">
    <property type="entry name" value="Ribosomal_uL29"/>
</dbReference>
<dbReference type="InterPro" id="IPR018254">
    <property type="entry name" value="Ribosomal_uL29_CS"/>
</dbReference>
<dbReference type="InterPro" id="IPR036049">
    <property type="entry name" value="Ribosomal_uL29_sf"/>
</dbReference>
<dbReference type="NCBIfam" id="TIGR00012">
    <property type="entry name" value="L29"/>
    <property type="match status" value="1"/>
</dbReference>
<dbReference type="PANTHER" id="PTHR10916">
    <property type="entry name" value="60S RIBOSOMAL PROTEIN L35/50S RIBOSOMAL PROTEIN L29"/>
    <property type="match status" value="1"/>
</dbReference>
<dbReference type="PANTHER" id="PTHR10916:SF0">
    <property type="entry name" value="LARGE RIBOSOMAL SUBUNIT PROTEIN UL29C"/>
    <property type="match status" value="1"/>
</dbReference>
<dbReference type="Pfam" id="PF00831">
    <property type="entry name" value="Ribosomal_L29"/>
    <property type="match status" value="1"/>
</dbReference>
<dbReference type="SUPFAM" id="SSF46561">
    <property type="entry name" value="Ribosomal protein L29 (L29p)"/>
    <property type="match status" value="1"/>
</dbReference>
<dbReference type="PROSITE" id="PS00579">
    <property type="entry name" value="RIBOSOMAL_L29"/>
    <property type="match status" value="1"/>
</dbReference>
<feature type="chain" id="PRO_0000130504" description="Large ribosomal subunit protein uL29">
    <location>
        <begin position="1"/>
        <end position="63"/>
    </location>
</feature>
<reference key="1">
    <citation type="journal article" date="2004" name="Proc. Natl. Acad. Sci. U.S.A.">
        <title>Insights into the evolution of Yersinia pestis through whole-genome comparison with Yersinia pseudotuberculosis.</title>
        <authorList>
            <person name="Chain P.S.G."/>
            <person name="Carniel E."/>
            <person name="Larimer F.W."/>
            <person name="Lamerdin J."/>
            <person name="Stoutland P.O."/>
            <person name="Regala W.M."/>
            <person name="Georgescu A.M."/>
            <person name="Vergez L.M."/>
            <person name="Land M.L."/>
            <person name="Motin V.L."/>
            <person name="Brubaker R.R."/>
            <person name="Fowler J."/>
            <person name="Hinnebusch J."/>
            <person name="Marceau M."/>
            <person name="Medigue C."/>
            <person name="Simonet M."/>
            <person name="Chenal-Francisque V."/>
            <person name="Souza B."/>
            <person name="Dacheux D."/>
            <person name="Elliott J.M."/>
            <person name="Derbise A."/>
            <person name="Hauser L.J."/>
            <person name="Garcia E."/>
        </authorList>
    </citation>
    <scope>NUCLEOTIDE SEQUENCE [LARGE SCALE GENOMIC DNA]</scope>
    <source>
        <strain>IP32953</strain>
    </source>
</reference>
<evidence type="ECO:0000255" key="1">
    <source>
        <dbReference type="HAMAP-Rule" id="MF_00374"/>
    </source>
</evidence>
<evidence type="ECO:0000305" key="2"/>
<gene>
    <name evidence="1" type="primary">rpmC</name>
    <name type="ordered locus">YPTB3690</name>
</gene>
<protein>
    <recommendedName>
        <fullName evidence="1">Large ribosomal subunit protein uL29</fullName>
    </recommendedName>
    <alternativeName>
        <fullName evidence="2">50S ribosomal protein L29</fullName>
    </alternativeName>
</protein>
<organism>
    <name type="scientific">Yersinia pseudotuberculosis serotype I (strain IP32953)</name>
    <dbReference type="NCBI Taxonomy" id="273123"/>
    <lineage>
        <taxon>Bacteria</taxon>
        <taxon>Pseudomonadati</taxon>
        <taxon>Pseudomonadota</taxon>
        <taxon>Gammaproteobacteria</taxon>
        <taxon>Enterobacterales</taxon>
        <taxon>Yersiniaceae</taxon>
        <taxon>Yersinia</taxon>
    </lineage>
</organism>
<keyword id="KW-0687">Ribonucleoprotein</keyword>
<keyword id="KW-0689">Ribosomal protein</keyword>